<keyword id="KW-1185">Reference proteome</keyword>
<reference key="1">
    <citation type="journal article" date="2004" name="J. Mol. Microbiol. Biotechnol.">
        <title>The complete genome sequence of Bacillus licheniformis DSM13, an organism with great industrial potential.</title>
        <authorList>
            <person name="Veith B."/>
            <person name="Herzberg C."/>
            <person name="Steckel S."/>
            <person name="Feesche J."/>
            <person name="Maurer K.H."/>
            <person name="Ehrenreich P."/>
            <person name="Baeumer S."/>
            <person name="Henne A."/>
            <person name="Liesegang H."/>
            <person name="Merkl R."/>
            <person name="Ehrenreich A."/>
            <person name="Gottschalk G."/>
        </authorList>
    </citation>
    <scope>NUCLEOTIDE SEQUENCE [LARGE SCALE GENOMIC DNA]</scope>
    <source>
        <strain>ATCC 14580 / DSM 13 / JCM 2505 / CCUG 7422 / NBRC 12200 / NCIMB 9375 / NCTC 10341 / NRRL NRS-1264 / Gibson 46</strain>
    </source>
</reference>
<reference key="2">
    <citation type="journal article" date="2004" name="Genome Biol.">
        <title>Complete genome sequence of the industrial bacterium Bacillus licheniformis and comparisons with closely related Bacillus species.</title>
        <authorList>
            <person name="Rey M.W."/>
            <person name="Ramaiya P."/>
            <person name="Nelson B.A."/>
            <person name="Brody-Karpin S.D."/>
            <person name="Zaretsky E.J."/>
            <person name="Tang M."/>
            <person name="Lopez de Leon A."/>
            <person name="Xiang H."/>
            <person name="Gusti V."/>
            <person name="Clausen I.G."/>
            <person name="Olsen P.B."/>
            <person name="Rasmussen M.D."/>
            <person name="Andersen J.T."/>
            <person name="Joergensen P.L."/>
            <person name="Larsen T.S."/>
            <person name="Sorokin A."/>
            <person name="Bolotin A."/>
            <person name="Lapidus A."/>
            <person name="Galleron N."/>
            <person name="Ehrlich S.D."/>
            <person name="Berka R.M."/>
        </authorList>
    </citation>
    <scope>NUCLEOTIDE SEQUENCE [LARGE SCALE GENOMIC DNA]</scope>
    <source>
        <strain>ATCC 14580 / DSM 13 / JCM 2505 / CCUG 7422 / NBRC 12200 / NCIMB 9375 / NCTC 10341 / NRRL NRS-1264 / Gibson 46</strain>
    </source>
</reference>
<feature type="chain" id="PRO_0000110641" description="UPF0358 protein BLi01701/BL02974">
    <location>
        <begin position="1"/>
        <end position="93"/>
    </location>
</feature>
<dbReference type="EMBL" id="AE017333">
    <property type="protein sequence ID" value="AAU40597.1"/>
    <property type="molecule type" value="Genomic_DNA"/>
</dbReference>
<dbReference type="EMBL" id="CP000002">
    <property type="protein sequence ID" value="AAU23240.1"/>
    <property type="molecule type" value="Genomic_DNA"/>
</dbReference>
<dbReference type="RefSeq" id="WP_003181465.1">
    <property type="nucleotide sequence ID" value="NC_006322.1"/>
</dbReference>
<dbReference type="SMR" id="Q65K17"/>
<dbReference type="STRING" id="279010.BL02974"/>
<dbReference type="KEGG" id="bld:BLi01701"/>
<dbReference type="KEGG" id="bli:BL02974"/>
<dbReference type="eggNOG" id="COG4838">
    <property type="taxonomic scope" value="Bacteria"/>
</dbReference>
<dbReference type="HOGENOM" id="CLU_160493_1_0_9"/>
<dbReference type="Proteomes" id="UP000000606">
    <property type="component" value="Chromosome"/>
</dbReference>
<dbReference type="Gene3D" id="1.10.287.750">
    <property type="entry name" value="SO2669-like"/>
    <property type="match status" value="1"/>
</dbReference>
<dbReference type="HAMAP" id="MF_01560">
    <property type="entry name" value="UPF0358"/>
    <property type="match status" value="1"/>
</dbReference>
<dbReference type="InterPro" id="IPR009983">
    <property type="entry name" value="UPF0358"/>
</dbReference>
<dbReference type="InterPro" id="IPR036270">
    <property type="entry name" value="UPF0358_sf"/>
</dbReference>
<dbReference type="NCBIfam" id="NF010187">
    <property type="entry name" value="PRK13666.1"/>
    <property type="match status" value="1"/>
</dbReference>
<dbReference type="Pfam" id="PF07408">
    <property type="entry name" value="DUF1507"/>
    <property type="match status" value="1"/>
</dbReference>
<dbReference type="SUPFAM" id="SSF140404">
    <property type="entry name" value="EF2458-like"/>
    <property type="match status" value="1"/>
</dbReference>
<gene>
    <name type="ordered locus">BLi01701</name>
    <name type="ordered locus">BL02974</name>
</gene>
<evidence type="ECO:0000255" key="1">
    <source>
        <dbReference type="HAMAP-Rule" id="MF_01560"/>
    </source>
</evidence>
<comment type="similarity">
    <text evidence="1">Belongs to the UPF0358 family.</text>
</comment>
<proteinExistence type="inferred from homology"/>
<organism>
    <name type="scientific">Bacillus licheniformis (strain ATCC 14580 / DSM 13 / JCM 2505 / CCUG 7422 / NBRC 12200 / NCIMB 9375 / NCTC 10341 / NRRL NRS-1264 / Gibson 46)</name>
    <dbReference type="NCBI Taxonomy" id="279010"/>
    <lineage>
        <taxon>Bacteria</taxon>
        <taxon>Bacillati</taxon>
        <taxon>Bacillota</taxon>
        <taxon>Bacilli</taxon>
        <taxon>Bacillales</taxon>
        <taxon>Bacillaceae</taxon>
        <taxon>Bacillus</taxon>
    </lineage>
</organism>
<protein>
    <recommendedName>
        <fullName evidence="1">UPF0358 protein BLi01701/BL02974</fullName>
    </recommendedName>
</protein>
<accession>Q65K17</accession>
<accession>Q62VG8</accession>
<name>Y1701_BACLD</name>
<sequence length="93" mass="10776">MASEIVVDHREKALALLKRDADKILKLIQVQMDNLTMPQCPLYEEVLDTQMFGLSREIDFAVRLGLVDEEEGKELLYRLERELSALHDAFTKK</sequence>